<gene>
    <name evidence="1" type="primary">nuoA</name>
    <name type="ordered locus">b2288</name>
    <name type="ordered locus">JW2283</name>
</gene>
<evidence type="ECO:0000255" key="1">
    <source>
        <dbReference type="HAMAP-Rule" id="MF_01394"/>
    </source>
</evidence>
<evidence type="ECO:0000269" key="2">
    <source>
    </source>
</evidence>
<evidence type="ECO:0000305" key="3"/>
<evidence type="ECO:0007829" key="4">
    <source>
        <dbReference type="PDB" id="7Z7S"/>
    </source>
</evidence>
<evidence type="ECO:0007829" key="5">
    <source>
        <dbReference type="PDB" id="7Z7V"/>
    </source>
</evidence>
<feature type="chain" id="PRO_0000117862" description="NADH-quinone oxidoreductase subunit A">
    <location>
        <begin position="1"/>
        <end position="147"/>
    </location>
</feature>
<feature type="transmembrane region" description="Helical" evidence="1">
    <location>
        <begin position="16"/>
        <end position="36"/>
    </location>
</feature>
<feature type="transmembrane region" description="Helical" evidence="1">
    <location>
        <begin position="68"/>
        <end position="88"/>
    </location>
</feature>
<feature type="transmembrane region" description="Helical" evidence="1">
    <location>
        <begin position="98"/>
        <end position="118"/>
    </location>
</feature>
<feature type="sequence conflict" description="In Ref. 1; CAA48360." evidence="3" ref="1">
    <original>A</original>
    <variation>G</variation>
    <location>
        <position position="60"/>
    </location>
</feature>
<feature type="sequence conflict" description="In Ref. 1; CAA48360." evidence="3" ref="1">
    <original>ALYLFAWSTS</original>
    <variation>GAVSVRMVLL</variation>
    <location>
        <begin position="82"/>
        <end position="91"/>
    </location>
</feature>
<feature type="helix" evidence="5">
    <location>
        <begin position="7"/>
        <end position="36"/>
    </location>
</feature>
<feature type="strand" evidence="5">
    <location>
        <begin position="44"/>
        <end position="48"/>
    </location>
</feature>
<feature type="helix" evidence="5">
    <location>
        <begin position="67"/>
        <end position="89"/>
    </location>
</feature>
<feature type="helix" evidence="5">
    <location>
        <begin position="92"/>
        <end position="119"/>
    </location>
</feature>
<feature type="turn" evidence="5">
    <location>
        <begin position="120"/>
        <end position="123"/>
    </location>
</feature>
<feature type="helix" evidence="4">
    <location>
        <begin position="128"/>
        <end position="130"/>
    </location>
</feature>
<dbReference type="EC" id="7.1.1.-" evidence="1"/>
<dbReference type="EMBL" id="X68301">
    <property type="protein sequence ID" value="CAA48360.1"/>
    <property type="molecule type" value="Genomic_DNA"/>
</dbReference>
<dbReference type="EMBL" id="U00096">
    <property type="protein sequence ID" value="AAC75348.1"/>
    <property type="molecule type" value="Genomic_DNA"/>
</dbReference>
<dbReference type="EMBL" id="AP009048">
    <property type="protein sequence ID" value="BAA16123.1"/>
    <property type="molecule type" value="Genomic_DNA"/>
</dbReference>
<dbReference type="PIR" id="F65000">
    <property type="entry name" value="F65000"/>
</dbReference>
<dbReference type="RefSeq" id="NP_416791.3">
    <property type="nucleotide sequence ID" value="NC_000913.3"/>
</dbReference>
<dbReference type="RefSeq" id="WP_000062997.1">
    <property type="nucleotide sequence ID" value="NZ_STEB01000008.1"/>
</dbReference>
<dbReference type="PDB" id="7NYH">
    <property type="method" value="EM"/>
    <property type="resolution" value="3.60 A"/>
    <property type="chains" value="A=1-147"/>
</dbReference>
<dbReference type="PDB" id="7NYR">
    <property type="method" value="EM"/>
    <property type="resolution" value="3.30 A"/>
    <property type="chains" value="A=1-147"/>
</dbReference>
<dbReference type="PDB" id="7NYU">
    <property type="method" value="EM"/>
    <property type="resolution" value="3.80 A"/>
    <property type="chains" value="A=1-147"/>
</dbReference>
<dbReference type="PDB" id="7NYV">
    <property type="method" value="EM"/>
    <property type="resolution" value="3.70 A"/>
    <property type="chains" value="A=1-147"/>
</dbReference>
<dbReference type="PDB" id="7P61">
    <property type="method" value="EM"/>
    <property type="resolution" value="3.20 A"/>
    <property type="chains" value="A=1-147"/>
</dbReference>
<dbReference type="PDB" id="7P62">
    <property type="method" value="EM"/>
    <property type="resolution" value="3.60 A"/>
    <property type="chains" value="A=1-147"/>
</dbReference>
<dbReference type="PDB" id="7P63">
    <property type="method" value="EM"/>
    <property type="resolution" value="3.40 A"/>
    <property type="chains" value="A=1-147"/>
</dbReference>
<dbReference type="PDB" id="7P64">
    <property type="method" value="EM"/>
    <property type="resolution" value="2.50 A"/>
    <property type="chains" value="A=1-147"/>
</dbReference>
<dbReference type="PDB" id="7P69">
    <property type="method" value="EM"/>
    <property type="resolution" value="3.00 A"/>
    <property type="chains" value="A=1-147"/>
</dbReference>
<dbReference type="PDB" id="7P7C">
    <property type="method" value="EM"/>
    <property type="resolution" value="2.40 A"/>
    <property type="chains" value="A=1-147"/>
</dbReference>
<dbReference type="PDB" id="7P7E">
    <property type="method" value="EM"/>
    <property type="resolution" value="2.70 A"/>
    <property type="chains" value="A=1-147"/>
</dbReference>
<dbReference type="PDB" id="7P7J">
    <property type="method" value="EM"/>
    <property type="resolution" value="2.70 A"/>
    <property type="chains" value="A=1-147"/>
</dbReference>
<dbReference type="PDB" id="7P7K">
    <property type="method" value="EM"/>
    <property type="resolution" value="3.10 A"/>
    <property type="chains" value="A=1-147"/>
</dbReference>
<dbReference type="PDB" id="7P7L">
    <property type="method" value="EM"/>
    <property type="resolution" value="3.00 A"/>
    <property type="chains" value="A=1-147"/>
</dbReference>
<dbReference type="PDB" id="7P7M">
    <property type="method" value="EM"/>
    <property type="resolution" value="3.20 A"/>
    <property type="chains" value="A=1-147"/>
</dbReference>
<dbReference type="PDB" id="7Z7R">
    <property type="method" value="EM"/>
    <property type="resolution" value="3.36 A"/>
    <property type="chains" value="A=1-147"/>
</dbReference>
<dbReference type="PDB" id="7Z7S">
    <property type="method" value="EM"/>
    <property type="resolution" value="2.40 A"/>
    <property type="chains" value="A=1-147"/>
</dbReference>
<dbReference type="PDB" id="7Z7T">
    <property type="method" value="EM"/>
    <property type="resolution" value="3.10 A"/>
    <property type="chains" value="A=1-147"/>
</dbReference>
<dbReference type="PDB" id="7Z7V">
    <property type="method" value="EM"/>
    <property type="resolution" value="2.29 A"/>
    <property type="chains" value="A=1-147"/>
</dbReference>
<dbReference type="PDB" id="7Z80">
    <property type="method" value="EM"/>
    <property type="resolution" value="2.93 A"/>
    <property type="chains" value="A=1-147"/>
</dbReference>
<dbReference type="PDB" id="7Z83">
    <property type="method" value="EM"/>
    <property type="resolution" value="2.88 A"/>
    <property type="chains" value="A=1-147"/>
</dbReference>
<dbReference type="PDB" id="7Z84">
    <property type="method" value="EM"/>
    <property type="resolution" value="2.87 A"/>
    <property type="chains" value="A=1-147"/>
</dbReference>
<dbReference type="PDB" id="7ZC5">
    <property type="method" value="EM"/>
    <property type="resolution" value="3.00 A"/>
    <property type="chains" value="A=1-147"/>
</dbReference>
<dbReference type="PDB" id="7ZCI">
    <property type="method" value="EM"/>
    <property type="resolution" value="2.69 A"/>
    <property type="chains" value="A=1-147"/>
</dbReference>
<dbReference type="PDBsum" id="7NYH"/>
<dbReference type="PDBsum" id="7NYR"/>
<dbReference type="PDBsum" id="7NYU"/>
<dbReference type="PDBsum" id="7NYV"/>
<dbReference type="PDBsum" id="7P61"/>
<dbReference type="PDBsum" id="7P62"/>
<dbReference type="PDBsum" id="7P63"/>
<dbReference type="PDBsum" id="7P64"/>
<dbReference type="PDBsum" id="7P69"/>
<dbReference type="PDBsum" id="7P7C"/>
<dbReference type="PDBsum" id="7P7E"/>
<dbReference type="PDBsum" id="7P7J"/>
<dbReference type="PDBsum" id="7P7K"/>
<dbReference type="PDBsum" id="7P7L"/>
<dbReference type="PDBsum" id="7P7M"/>
<dbReference type="PDBsum" id="7Z7R"/>
<dbReference type="PDBsum" id="7Z7S"/>
<dbReference type="PDBsum" id="7Z7T"/>
<dbReference type="PDBsum" id="7Z7V"/>
<dbReference type="PDBsum" id="7Z80"/>
<dbReference type="PDBsum" id="7Z83"/>
<dbReference type="PDBsum" id="7Z84"/>
<dbReference type="PDBsum" id="7ZC5"/>
<dbReference type="PDBsum" id="7ZCI"/>
<dbReference type="EMDB" id="EMD-12652"/>
<dbReference type="EMDB" id="EMD-12653"/>
<dbReference type="EMDB" id="EMD-12654"/>
<dbReference type="EMDB" id="EMD-12655"/>
<dbReference type="SMR" id="P0AFC3"/>
<dbReference type="BioGRID" id="4262974">
    <property type="interactions" value="132"/>
</dbReference>
<dbReference type="ComplexPortal" id="CPX-243">
    <property type="entry name" value="Respiratory chain complex I"/>
</dbReference>
<dbReference type="DIP" id="DIP-59257N"/>
<dbReference type="FunCoup" id="P0AFC3">
    <property type="interactions" value="265"/>
</dbReference>
<dbReference type="IntAct" id="P0AFC3">
    <property type="interactions" value="5"/>
</dbReference>
<dbReference type="STRING" id="511145.b2288"/>
<dbReference type="TCDB" id="3.D.1.1.1">
    <property type="family name" value="the h+ or na+-translocating nadh dehydrogenase (ndh) family"/>
</dbReference>
<dbReference type="jPOST" id="P0AFC3"/>
<dbReference type="PaxDb" id="511145-b2288"/>
<dbReference type="EnsemblBacteria" id="AAC75348">
    <property type="protein sequence ID" value="AAC75348"/>
    <property type="gene ID" value="b2288"/>
</dbReference>
<dbReference type="GeneID" id="93774886"/>
<dbReference type="GeneID" id="946764"/>
<dbReference type="KEGG" id="ecj:JW2283"/>
<dbReference type="KEGG" id="eco:b2288"/>
<dbReference type="KEGG" id="ecoc:C3026_12765"/>
<dbReference type="PATRIC" id="fig|1411691.4.peg.4448"/>
<dbReference type="EchoBASE" id="EB2007"/>
<dbReference type="eggNOG" id="COG0838">
    <property type="taxonomic scope" value="Bacteria"/>
</dbReference>
<dbReference type="HOGENOM" id="CLU_119549_2_0_6"/>
<dbReference type="InParanoid" id="P0AFC3"/>
<dbReference type="OMA" id="YVYAFLY"/>
<dbReference type="OrthoDB" id="9791970at2"/>
<dbReference type="PhylomeDB" id="P0AFC3"/>
<dbReference type="BioCyc" id="EcoCyc:NUOA-MONOMER"/>
<dbReference type="BioCyc" id="MetaCyc:NUOA-MONOMER"/>
<dbReference type="PRO" id="PR:P0AFC3"/>
<dbReference type="Proteomes" id="UP000000625">
    <property type="component" value="Chromosome"/>
</dbReference>
<dbReference type="GO" id="GO:0016020">
    <property type="term" value="C:membrane"/>
    <property type="evidence" value="ECO:0000314"/>
    <property type="project" value="ComplexPortal"/>
</dbReference>
<dbReference type="GO" id="GO:0030964">
    <property type="term" value="C:NADH dehydrogenase complex"/>
    <property type="evidence" value="ECO:0000314"/>
    <property type="project" value="EcoliWiki"/>
</dbReference>
<dbReference type="GO" id="GO:0005886">
    <property type="term" value="C:plasma membrane"/>
    <property type="evidence" value="ECO:0000314"/>
    <property type="project" value="EcoCyc"/>
</dbReference>
<dbReference type="GO" id="GO:0045271">
    <property type="term" value="C:respiratory chain complex I"/>
    <property type="evidence" value="ECO:0000314"/>
    <property type="project" value="EcoCyc"/>
</dbReference>
<dbReference type="GO" id="GO:0008137">
    <property type="term" value="F:NADH dehydrogenase (ubiquinone) activity"/>
    <property type="evidence" value="ECO:0000315"/>
    <property type="project" value="EcoCyc"/>
</dbReference>
<dbReference type="GO" id="GO:0050136">
    <property type="term" value="F:NADH:ubiquinone reductase (non-electrogenic) activity"/>
    <property type="evidence" value="ECO:0007669"/>
    <property type="project" value="UniProtKB-UniRule"/>
</dbReference>
<dbReference type="GO" id="GO:0048038">
    <property type="term" value="F:quinone binding"/>
    <property type="evidence" value="ECO:0007669"/>
    <property type="project" value="UniProtKB-KW"/>
</dbReference>
<dbReference type="GO" id="GO:0022904">
    <property type="term" value="P:respiratory electron transport chain"/>
    <property type="evidence" value="ECO:0000314"/>
    <property type="project" value="ComplexPortal"/>
</dbReference>
<dbReference type="FunFam" id="1.20.58.1610:FF:000003">
    <property type="entry name" value="NADH-quinone oxidoreductase subunit A"/>
    <property type="match status" value="1"/>
</dbReference>
<dbReference type="Gene3D" id="1.20.58.1610">
    <property type="entry name" value="NADH:ubiquinone/plastoquinone oxidoreductase, chain 3"/>
    <property type="match status" value="1"/>
</dbReference>
<dbReference type="HAMAP" id="MF_01394">
    <property type="entry name" value="NDH1_NuoA"/>
    <property type="match status" value="1"/>
</dbReference>
<dbReference type="InterPro" id="IPR023043">
    <property type="entry name" value="NAD(P)H_OxRDtase_bac/plastid"/>
</dbReference>
<dbReference type="InterPro" id="IPR000440">
    <property type="entry name" value="NADH_UbQ/plastoQ_OxRdtase_su3"/>
</dbReference>
<dbReference type="InterPro" id="IPR038430">
    <property type="entry name" value="NDAH_ubi_oxred_su3_sf"/>
</dbReference>
<dbReference type="PANTHER" id="PTHR11058:SF21">
    <property type="entry name" value="NADH-QUINONE OXIDOREDUCTASE SUBUNIT A"/>
    <property type="match status" value="1"/>
</dbReference>
<dbReference type="PANTHER" id="PTHR11058">
    <property type="entry name" value="NADH-UBIQUINONE OXIDOREDUCTASE CHAIN 3"/>
    <property type="match status" value="1"/>
</dbReference>
<dbReference type="Pfam" id="PF00507">
    <property type="entry name" value="Oxidored_q4"/>
    <property type="match status" value="1"/>
</dbReference>
<organism>
    <name type="scientific">Escherichia coli (strain K12)</name>
    <dbReference type="NCBI Taxonomy" id="83333"/>
    <lineage>
        <taxon>Bacteria</taxon>
        <taxon>Pseudomonadati</taxon>
        <taxon>Pseudomonadota</taxon>
        <taxon>Gammaproteobacteria</taxon>
        <taxon>Enterobacterales</taxon>
        <taxon>Enterobacteriaceae</taxon>
        <taxon>Escherichia</taxon>
    </lineage>
</organism>
<proteinExistence type="evidence at protein level"/>
<accession>P0AFC3</accession>
<accession>P33597</accession>
<accession>P77159</accession>
<reference key="1">
    <citation type="journal article" date="1993" name="J. Mol. Biol.">
        <title>The gene locus of the proton-translocating NADH: ubiquinone oxidoreductase in Escherichia coli. Organization of the 14 genes and relationship between the derived proteins and subunits of mitochondrial complex I.</title>
        <authorList>
            <person name="Weidner U."/>
            <person name="Geier S."/>
            <person name="Ptock A."/>
            <person name="Friedrich T."/>
            <person name="Leif H."/>
            <person name="Weiss H."/>
        </authorList>
    </citation>
    <scope>NUCLEOTIDE SEQUENCE [GENOMIC DNA]</scope>
    <source>
        <strain>K12 / AN387</strain>
    </source>
</reference>
<reference key="2">
    <citation type="journal article" date="1997" name="DNA Res.">
        <title>Construction of a contiguous 874-kb sequence of the Escherichia coli-K12 genome corresponding to 50.0-68.8 min on the linkage map and analysis of its sequence features.</title>
        <authorList>
            <person name="Yamamoto Y."/>
            <person name="Aiba H."/>
            <person name="Baba T."/>
            <person name="Hayashi K."/>
            <person name="Inada T."/>
            <person name="Isono K."/>
            <person name="Itoh T."/>
            <person name="Kimura S."/>
            <person name="Kitagawa M."/>
            <person name="Makino K."/>
            <person name="Miki T."/>
            <person name="Mitsuhashi N."/>
            <person name="Mizobuchi K."/>
            <person name="Mori H."/>
            <person name="Nakade S."/>
            <person name="Nakamura Y."/>
            <person name="Nashimoto H."/>
            <person name="Oshima T."/>
            <person name="Oyama S."/>
            <person name="Saito N."/>
            <person name="Sampei G."/>
            <person name="Satoh Y."/>
            <person name="Sivasundaram S."/>
            <person name="Tagami H."/>
            <person name="Takahashi H."/>
            <person name="Takeda J."/>
            <person name="Takemoto K."/>
            <person name="Uehara K."/>
            <person name="Wada C."/>
            <person name="Yamagata S."/>
            <person name="Horiuchi T."/>
        </authorList>
    </citation>
    <scope>NUCLEOTIDE SEQUENCE [LARGE SCALE GENOMIC DNA]</scope>
    <source>
        <strain>K12 / W3110 / ATCC 27325 / DSM 5911</strain>
    </source>
</reference>
<reference key="3">
    <citation type="journal article" date="1997" name="Science">
        <title>The complete genome sequence of Escherichia coli K-12.</title>
        <authorList>
            <person name="Blattner F.R."/>
            <person name="Plunkett G. III"/>
            <person name="Bloch C.A."/>
            <person name="Perna N.T."/>
            <person name="Burland V."/>
            <person name="Riley M."/>
            <person name="Collado-Vides J."/>
            <person name="Glasner J.D."/>
            <person name="Rode C.K."/>
            <person name="Mayhew G.F."/>
            <person name="Gregor J."/>
            <person name="Davis N.W."/>
            <person name="Kirkpatrick H.A."/>
            <person name="Goeden M.A."/>
            <person name="Rose D.J."/>
            <person name="Mau B."/>
            <person name="Shao Y."/>
        </authorList>
    </citation>
    <scope>NUCLEOTIDE SEQUENCE [LARGE SCALE GENOMIC DNA]</scope>
    <source>
        <strain>K12 / MG1655 / ATCC 47076</strain>
    </source>
</reference>
<reference key="4">
    <citation type="journal article" date="2006" name="Mol. Syst. Biol.">
        <title>Highly accurate genome sequences of Escherichia coli K-12 strains MG1655 and W3110.</title>
        <authorList>
            <person name="Hayashi K."/>
            <person name="Morooka N."/>
            <person name="Yamamoto Y."/>
            <person name="Fujita K."/>
            <person name="Isono K."/>
            <person name="Choi S."/>
            <person name="Ohtsubo E."/>
            <person name="Baba T."/>
            <person name="Wanner B.L."/>
            <person name="Mori H."/>
            <person name="Horiuchi T."/>
        </authorList>
    </citation>
    <scope>NUCLEOTIDE SEQUENCE [LARGE SCALE GENOMIC DNA]</scope>
    <source>
        <strain>K12 / W3110 / ATCC 27325 / DSM 5911</strain>
    </source>
</reference>
<reference key="5">
    <citation type="journal article" date="2005" name="Science">
        <title>Global topology analysis of the Escherichia coli inner membrane proteome.</title>
        <authorList>
            <person name="Daley D.O."/>
            <person name="Rapp M."/>
            <person name="Granseth E."/>
            <person name="Melen K."/>
            <person name="Drew D."/>
            <person name="von Heijne G."/>
        </authorList>
    </citation>
    <scope>SUBCELLULAR LOCATION</scope>
    <source>
        <strain>K12 / MG1655 / ATCC 47076</strain>
    </source>
</reference>
<protein>
    <recommendedName>
        <fullName evidence="1">NADH-quinone oxidoreductase subunit A</fullName>
        <ecNumber evidence="1">7.1.1.-</ecNumber>
    </recommendedName>
    <alternativeName>
        <fullName evidence="1">NADH dehydrogenase I subunit A</fullName>
    </alternativeName>
    <alternativeName>
        <fullName evidence="1">NDH-1 subunit A</fullName>
    </alternativeName>
    <alternativeName>
        <fullName evidence="1">NUO1</fullName>
    </alternativeName>
</protein>
<sequence length="147" mass="16457">MSMSTSTEVIAHHWAFAIFLIVAIGLCCLMLVGGWFLGGRARARSKNVPFESGIDSVGSARLRLSAKFYLVAMFFVIFDVEALYLFAWSTSIRESGWVGFVEAAIFIFVLLAGLVYLVRIGALDWTPARSRRERMNPETNSIANRQR</sequence>
<name>NUOA_ECOLI</name>
<comment type="function">
    <text>NDH-1 shuttles electrons from NADH, via FMN and iron-sulfur (Fe-S) centers, to quinones in the respiratory chain. The immediate electron acceptor for the enzyme in this species is believed to be ubiquinone. Couples the redox reaction to proton translocation (for every two electrons transferred, four hydrogen ions are translocated across the cytoplasmic membrane), and thus conserves the redox energy in a proton gradient.</text>
</comment>
<comment type="catalytic activity">
    <reaction evidence="1">
        <text>a quinone + NADH + 5 H(+)(in) = a quinol + NAD(+) + 4 H(+)(out)</text>
        <dbReference type="Rhea" id="RHEA:57888"/>
        <dbReference type="ChEBI" id="CHEBI:15378"/>
        <dbReference type="ChEBI" id="CHEBI:24646"/>
        <dbReference type="ChEBI" id="CHEBI:57540"/>
        <dbReference type="ChEBI" id="CHEBI:57945"/>
        <dbReference type="ChEBI" id="CHEBI:132124"/>
    </reaction>
</comment>
<comment type="subunit">
    <text>NDH-1 is composed of 13 different subunits. Subunits NuoA, H, J, K, L, M, N constitute the membrane sector of the complex.</text>
</comment>
<comment type="subcellular location">
    <subcellularLocation>
        <location evidence="1 2">Cell inner membrane</location>
        <topology evidence="1 2">Multi-pass membrane protein</topology>
    </subcellularLocation>
</comment>
<comment type="similarity">
    <text evidence="1">Belongs to the complex I subunit 3 family.</text>
</comment>
<keyword id="KW-0002">3D-structure</keyword>
<keyword id="KW-0997">Cell inner membrane</keyword>
<keyword id="KW-1003">Cell membrane</keyword>
<keyword id="KW-0472">Membrane</keyword>
<keyword id="KW-0520">NAD</keyword>
<keyword id="KW-0874">Quinone</keyword>
<keyword id="KW-1185">Reference proteome</keyword>
<keyword id="KW-1278">Translocase</keyword>
<keyword id="KW-0812">Transmembrane</keyword>
<keyword id="KW-1133">Transmembrane helix</keyword>
<keyword id="KW-0813">Transport</keyword>
<keyword id="KW-0830">Ubiquinone</keyword>